<evidence type="ECO:0000269" key="1">
    <source>
    </source>
</evidence>
<protein>
    <recommendedName>
        <fullName>Uncharacterized protein YHR173C</fullName>
    </recommendedName>
</protein>
<feature type="chain" id="PRO_0000202931" description="Uncharacterized protein YHR173C">
    <location>
        <begin position="1"/>
        <end position="112"/>
    </location>
</feature>
<comment type="miscellaneous">
    <text evidence="1">Present with 149 molecules/cell in log phase SD medium.</text>
</comment>
<keyword id="KW-1185">Reference proteome</keyword>
<sequence length="112" mass="12877">MLFFFIYAWCHLSHTILQPSTKIQMIVRSKPESNGEKKLMNHDEPNDQYNQRNYPSEVYADLVSHFMNFAYGKVHESGLQKKGVRCVDVSISGCQFWNGIPLSASWCTSLVT</sequence>
<accession>P38864</accession>
<accession>I2HB51</accession>
<organism>
    <name type="scientific">Saccharomyces cerevisiae (strain ATCC 204508 / S288c)</name>
    <name type="common">Baker's yeast</name>
    <dbReference type="NCBI Taxonomy" id="559292"/>
    <lineage>
        <taxon>Eukaryota</taxon>
        <taxon>Fungi</taxon>
        <taxon>Dikarya</taxon>
        <taxon>Ascomycota</taxon>
        <taxon>Saccharomycotina</taxon>
        <taxon>Saccharomycetes</taxon>
        <taxon>Saccharomycetales</taxon>
        <taxon>Saccharomycetaceae</taxon>
        <taxon>Saccharomyces</taxon>
    </lineage>
</organism>
<gene>
    <name type="ordered locus">YHR173C</name>
</gene>
<reference key="1">
    <citation type="journal article" date="1994" name="Science">
        <title>Complete nucleotide sequence of Saccharomyces cerevisiae chromosome VIII.</title>
        <authorList>
            <person name="Johnston M."/>
            <person name="Andrews S."/>
            <person name="Brinkman R."/>
            <person name="Cooper J."/>
            <person name="Ding H."/>
            <person name="Dover J."/>
            <person name="Du Z."/>
            <person name="Favello A."/>
            <person name="Fulton L."/>
            <person name="Gattung S."/>
            <person name="Geisel C."/>
            <person name="Kirsten J."/>
            <person name="Kucaba T."/>
            <person name="Hillier L.W."/>
            <person name="Jier M."/>
            <person name="Johnston L."/>
            <person name="Langston Y."/>
            <person name="Latreille P."/>
            <person name="Louis E.J."/>
            <person name="Macri C."/>
            <person name="Mardis E."/>
            <person name="Menezes S."/>
            <person name="Mouser L."/>
            <person name="Nhan M."/>
            <person name="Rifkin L."/>
            <person name="Riles L."/>
            <person name="St Peter H."/>
            <person name="Trevaskis E."/>
            <person name="Vaughan K."/>
            <person name="Vignati D."/>
            <person name="Wilcox L."/>
            <person name="Wohldman P."/>
            <person name="Waterston R."/>
            <person name="Wilson R."/>
            <person name="Vaudin M."/>
        </authorList>
    </citation>
    <scope>NUCLEOTIDE SEQUENCE [LARGE SCALE GENOMIC DNA]</scope>
    <source>
        <strain>ATCC 204508 / S288c</strain>
    </source>
</reference>
<reference key="2">
    <citation type="journal article" date="2014" name="G3 (Bethesda)">
        <title>The reference genome sequence of Saccharomyces cerevisiae: Then and now.</title>
        <authorList>
            <person name="Engel S.R."/>
            <person name="Dietrich F.S."/>
            <person name="Fisk D.G."/>
            <person name="Binkley G."/>
            <person name="Balakrishnan R."/>
            <person name="Costanzo M.C."/>
            <person name="Dwight S.S."/>
            <person name="Hitz B.C."/>
            <person name="Karra K."/>
            <person name="Nash R.S."/>
            <person name="Weng S."/>
            <person name="Wong E.D."/>
            <person name="Lloyd P."/>
            <person name="Skrzypek M.S."/>
            <person name="Miyasato S.R."/>
            <person name="Simison M."/>
            <person name="Cherry J.M."/>
        </authorList>
    </citation>
    <scope>GENOME REANNOTATION</scope>
    <source>
        <strain>ATCC 204508 / S288c</strain>
    </source>
</reference>
<reference key="3">
    <citation type="journal article" date="2003" name="Nature">
        <title>Global analysis of protein expression in yeast.</title>
        <authorList>
            <person name="Ghaemmaghami S."/>
            <person name="Huh W.-K."/>
            <person name="Bower K."/>
            <person name="Howson R.W."/>
            <person name="Belle A."/>
            <person name="Dephoure N."/>
            <person name="O'Shea E.K."/>
            <person name="Weissman J.S."/>
        </authorList>
    </citation>
    <scope>LEVEL OF PROTEIN EXPRESSION [LARGE SCALE ANALYSIS]</scope>
</reference>
<proteinExistence type="evidence at protein level"/>
<dbReference type="EMBL" id="U00027">
    <property type="protein sequence ID" value="AAB68018.1"/>
    <property type="molecule type" value="Genomic_DNA"/>
</dbReference>
<dbReference type="EMBL" id="BK006934">
    <property type="protein sequence ID" value="DAA35091.1"/>
    <property type="molecule type" value="Genomic_DNA"/>
</dbReference>
<dbReference type="PIR" id="S48912">
    <property type="entry name" value="S48912"/>
</dbReference>
<dbReference type="RefSeq" id="NP_001257667.1">
    <property type="nucleotide sequence ID" value="NM_001270738.1"/>
</dbReference>
<dbReference type="BioGRID" id="300932">
    <property type="interactions" value="1"/>
</dbReference>
<dbReference type="FunCoup" id="P38864">
    <property type="interactions" value="26"/>
</dbReference>
<dbReference type="IntAct" id="P38864">
    <property type="interactions" value="1"/>
</dbReference>
<dbReference type="STRING" id="4932.YHR173C"/>
<dbReference type="PaxDb" id="4932-YHR173C"/>
<dbReference type="EnsemblFungi" id="YHR173C_mRNA">
    <property type="protein sequence ID" value="YHR173C"/>
    <property type="gene ID" value="YHR173C"/>
</dbReference>
<dbReference type="GeneID" id="856578"/>
<dbReference type="KEGG" id="sce:YHR173C"/>
<dbReference type="AGR" id="SGD:S000001216"/>
<dbReference type="SGD" id="S000001216">
    <property type="gene designation" value="YHR173C"/>
</dbReference>
<dbReference type="VEuPathDB" id="FungiDB:YHR173C"/>
<dbReference type="HOGENOM" id="CLU_2147832_0_0_1"/>
<dbReference type="InParanoid" id="P38864"/>
<dbReference type="OrthoDB" id="10347756at2759"/>
<dbReference type="BioCyc" id="YEAST:G3O-31207-MONOMER"/>
<dbReference type="BioGRID-ORCS" id="856578">
    <property type="hits" value="0 hits in 10 CRISPR screens"/>
</dbReference>
<dbReference type="PRO" id="PR:P38864"/>
<dbReference type="Proteomes" id="UP000002311">
    <property type="component" value="Chromosome VIII"/>
</dbReference>
<dbReference type="RNAct" id="P38864">
    <property type="molecule type" value="protein"/>
</dbReference>
<dbReference type="GO" id="GO:0000324">
    <property type="term" value="C:fungal-type vacuole"/>
    <property type="evidence" value="ECO:0007005"/>
    <property type="project" value="SGD"/>
</dbReference>
<name>YHX3_YEAST</name>